<protein>
    <recommendedName>
        <fullName>F-actin-capping protein subunit alpha</fullName>
    </recommendedName>
</protein>
<gene>
    <name type="primary">CAP1</name>
    <name type="ordered locus">DEHA2E20020g</name>
</gene>
<organism>
    <name type="scientific">Debaryomyces hansenii (strain ATCC 36239 / CBS 767 / BCRC 21394 / JCM 1990 / NBRC 0083 / IGC 2968)</name>
    <name type="common">Yeast</name>
    <name type="synonym">Torulaspora hansenii</name>
    <dbReference type="NCBI Taxonomy" id="284592"/>
    <lineage>
        <taxon>Eukaryota</taxon>
        <taxon>Fungi</taxon>
        <taxon>Dikarya</taxon>
        <taxon>Ascomycota</taxon>
        <taxon>Saccharomycotina</taxon>
        <taxon>Pichiomycetes</taxon>
        <taxon>Debaryomycetaceae</taxon>
        <taxon>Debaryomyces</taxon>
    </lineage>
</organism>
<comment type="function">
    <text evidence="1">F-actin-capping proteins bind in a Ca(2+)-independent manner to the fast growing ends of actin filaments (barbed end) thereby blocking the exchange of subunits at these ends. Unlike other capping proteins (such as gelsolin and severin), these proteins do not sever actin filaments (By similarity).</text>
</comment>
<comment type="subunit">
    <text evidence="1">Heterodimer of an alpha and a beta subunit.</text>
</comment>
<comment type="subcellular location">
    <subcellularLocation>
        <location evidence="1">Cytoplasm</location>
        <location evidence="1">Cytoskeleton</location>
    </subcellularLocation>
    <text evidence="1">Septum.</text>
</comment>
<comment type="similarity">
    <text evidence="2">Belongs to the F-actin-capping protein alpha subunit family.</text>
</comment>
<sequence length="266" mass="30009">MSSSVGLDTIVSSLVKSSPPGELDGISQDLSAILSSKSNSSTVNTAIEKYINENSGVFSSTYIASKINKHESSTKYIDFIGKKLFNIDLHKQTAIDFEDYEPEVKYPAYFDELVKKLTEYGEDHYPSKYAFTIVPDGSDLQIIIIGQKLNYENFYTGLWKSHYKIKSGSIEGEAKLDIHYYEDGNVRLNFEESTSGTLSSSNASEIVNFINNAENEMTLKIVEDFNELNQKYFKNLRRLLPVTRSKINWGQAIGNYRLGSDVVHNK</sequence>
<proteinExistence type="inferred from homology"/>
<reference key="1">
    <citation type="journal article" date="2004" name="Nature">
        <title>Genome evolution in yeasts.</title>
        <authorList>
            <person name="Dujon B."/>
            <person name="Sherman D."/>
            <person name="Fischer G."/>
            <person name="Durrens P."/>
            <person name="Casaregola S."/>
            <person name="Lafontaine I."/>
            <person name="de Montigny J."/>
            <person name="Marck C."/>
            <person name="Neuveglise C."/>
            <person name="Talla E."/>
            <person name="Goffard N."/>
            <person name="Frangeul L."/>
            <person name="Aigle M."/>
            <person name="Anthouard V."/>
            <person name="Babour A."/>
            <person name="Barbe V."/>
            <person name="Barnay S."/>
            <person name="Blanchin S."/>
            <person name="Beckerich J.-M."/>
            <person name="Beyne E."/>
            <person name="Bleykasten C."/>
            <person name="Boisrame A."/>
            <person name="Boyer J."/>
            <person name="Cattolico L."/>
            <person name="Confanioleri F."/>
            <person name="de Daruvar A."/>
            <person name="Despons L."/>
            <person name="Fabre E."/>
            <person name="Fairhead C."/>
            <person name="Ferry-Dumazet H."/>
            <person name="Groppi A."/>
            <person name="Hantraye F."/>
            <person name="Hennequin C."/>
            <person name="Jauniaux N."/>
            <person name="Joyet P."/>
            <person name="Kachouri R."/>
            <person name="Kerrest A."/>
            <person name="Koszul R."/>
            <person name="Lemaire M."/>
            <person name="Lesur I."/>
            <person name="Ma L."/>
            <person name="Muller H."/>
            <person name="Nicaud J.-M."/>
            <person name="Nikolski M."/>
            <person name="Oztas S."/>
            <person name="Ozier-Kalogeropoulos O."/>
            <person name="Pellenz S."/>
            <person name="Potier S."/>
            <person name="Richard G.-F."/>
            <person name="Straub M.-L."/>
            <person name="Suleau A."/>
            <person name="Swennen D."/>
            <person name="Tekaia F."/>
            <person name="Wesolowski-Louvel M."/>
            <person name="Westhof E."/>
            <person name="Wirth B."/>
            <person name="Zeniou-Meyer M."/>
            <person name="Zivanovic Y."/>
            <person name="Bolotin-Fukuhara M."/>
            <person name="Thierry A."/>
            <person name="Bouchier C."/>
            <person name="Caudron B."/>
            <person name="Scarpelli C."/>
            <person name="Gaillardin C."/>
            <person name="Weissenbach J."/>
            <person name="Wincker P."/>
            <person name="Souciet J.-L."/>
        </authorList>
    </citation>
    <scope>NUCLEOTIDE SEQUENCE [LARGE SCALE GENOMIC DNA]</scope>
    <source>
        <strain>ATCC 36239 / CBS 767 / BCRC 21394 / JCM 1990 / NBRC 0083 / IGC 2968</strain>
    </source>
</reference>
<keyword id="KW-0117">Actin capping</keyword>
<keyword id="KW-0009">Actin-binding</keyword>
<keyword id="KW-0963">Cytoplasm</keyword>
<keyword id="KW-0206">Cytoskeleton</keyword>
<keyword id="KW-1185">Reference proteome</keyword>
<evidence type="ECO:0000250" key="1"/>
<evidence type="ECO:0000305" key="2"/>
<dbReference type="EMBL" id="CR382137">
    <property type="protein sequence ID" value="CAG88449.2"/>
    <property type="molecule type" value="Genomic_DNA"/>
</dbReference>
<dbReference type="RefSeq" id="XP_460176.2">
    <property type="nucleotide sequence ID" value="XM_460176.1"/>
</dbReference>
<dbReference type="SMR" id="Q6BNP4"/>
<dbReference type="FunCoup" id="Q6BNP4">
    <property type="interactions" value="861"/>
</dbReference>
<dbReference type="STRING" id="284592.Q6BNP4"/>
<dbReference type="GeneID" id="2902750"/>
<dbReference type="KEGG" id="dha:DEHA2E20020g"/>
<dbReference type="VEuPathDB" id="FungiDB:DEHA2E20020g"/>
<dbReference type="eggNOG" id="KOG0836">
    <property type="taxonomic scope" value="Eukaryota"/>
</dbReference>
<dbReference type="HOGENOM" id="CLU_045161_3_0_1"/>
<dbReference type="InParanoid" id="Q6BNP4"/>
<dbReference type="OMA" id="VACIEDH"/>
<dbReference type="OrthoDB" id="340550at2759"/>
<dbReference type="Proteomes" id="UP000000599">
    <property type="component" value="Chromosome E"/>
</dbReference>
<dbReference type="GO" id="GO:0030479">
    <property type="term" value="C:actin cortical patch"/>
    <property type="evidence" value="ECO:0007669"/>
    <property type="project" value="EnsemblFungi"/>
</dbReference>
<dbReference type="GO" id="GO:0005934">
    <property type="term" value="C:cellular bud tip"/>
    <property type="evidence" value="ECO:0007669"/>
    <property type="project" value="EnsemblFungi"/>
</dbReference>
<dbReference type="GO" id="GO:0008290">
    <property type="term" value="C:F-actin capping protein complex"/>
    <property type="evidence" value="ECO:0007669"/>
    <property type="project" value="EnsemblFungi"/>
</dbReference>
<dbReference type="GO" id="GO:0000131">
    <property type="term" value="C:incipient cellular bud site"/>
    <property type="evidence" value="ECO:0007669"/>
    <property type="project" value="EnsemblFungi"/>
</dbReference>
<dbReference type="GO" id="GO:0110085">
    <property type="term" value="C:mitotic actomyosin contractile ring"/>
    <property type="evidence" value="ECO:0007669"/>
    <property type="project" value="EnsemblFungi"/>
</dbReference>
<dbReference type="GO" id="GO:0051015">
    <property type="term" value="F:actin filament binding"/>
    <property type="evidence" value="ECO:0007669"/>
    <property type="project" value="EnsemblFungi"/>
</dbReference>
<dbReference type="GO" id="GO:0030036">
    <property type="term" value="P:actin cytoskeleton organization"/>
    <property type="evidence" value="ECO:0007669"/>
    <property type="project" value="TreeGrafter"/>
</dbReference>
<dbReference type="GO" id="GO:0051016">
    <property type="term" value="P:barbed-end actin filament capping"/>
    <property type="evidence" value="ECO:0007669"/>
    <property type="project" value="EnsemblFungi"/>
</dbReference>
<dbReference type="Gene3D" id="3.30.1140.60">
    <property type="entry name" value="F-actin capping protein, alpha subunit"/>
    <property type="match status" value="1"/>
</dbReference>
<dbReference type="Gene3D" id="3.90.1150.210">
    <property type="entry name" value="F-actin capping protein, beta subunit"/>
    <property type="match status" value="1"/>
</dbReference>
<dbReference type="InterPro" id="IPR002189">
    <property type="entry name" value="CapZ_alpha"/>
</dbReference>
<dbReference type="InterPro" id="IPR037282">
    <property type="entry name" value="CapZ_alpha/beta"/>
</dbReference>
<dbReference type="InterPro" id="IPR042276">
    <property type="entry name" value="CapZ_alpha/beta_2"/>
</dbReference>
<dbReference type="InterPro" id="IPR042489">
    <property type="entry name" value="CapZ_alpha_1"/>
</dbReference>
<dbReference type="InterPro" id="IPR017865">
    <property type="entry name" value="F-actin_cap_asu_CS"/>
</dbReference>
<dbReference type="PANTHER" id="PTHR10653">
    <property type="entry name" value="F-ACTIN-CAPPING PROTEIN SUBUNIT ALPHA"/>
    <property type="match status" value="1"/>
</dbReference>
<dbReference type="PANTHER" id="PTHR10653:SF0">
    <property type="entry name" value="F-ACTIN-CAPPING PROTEIN SUBUNIT ALPHA"/>
    <property type="match status" value="1"/>
</dbReference>
<dbReference type="Pfam" id="PF01267">
    <property type="entry name" value="F-actin_cap_A"/>
    <property type="match status" value="1"/>
</dbReference>
<dbReference type="PRINTS" id="PR00191">
    <property type="entry name" value="FACTINCAPA"/>
</dbReference>
<dbReference type="SUPFAM" id="SSF90096">
    <property type="entry name" value="Subunits of heterodimeric actin filament capping protein Capz"/>
    <property type="match status" value="1"/>
</dbReference>
<dbReference type="PROSITE" id="PS00749">
    <property type="entry name" value="F_ACTIN_CAPPING_A_2"/>
    <property type="match status" value="1"/>
</dbReference>
<accession>Q6BNP4</accession>
<feature type="chain" id="PRO_0000255617" description="F-actin-capping protein subunit alpha">
    <location>
        <begin position="1"/>
        <end position="266"/>
    </location>
</feature>
<name>CAPZA_DEBHA</name>